<keyword id="KW-0067">ATP-binding</keyword>
<keyword id="KW-0963">Cytoplasm</keyword>
<keyword id="KW-0227">DNA damage</keyword>
<keyword id="KW-0233">DNA recombination</keyword>
<keyword id="KW-0234">DNA repair</keyword>
<keyword id="KW-0238">DNA-binding</keyword>
<keyword id="KW-0547">Nucleotide-binding</keyword>
<keyword id="KW-0742">SOS response</keyword>
<evidence type="ECO:0000255" key="1">
    <source>
        <dbReference type="HAMAP-Rule" id="MF_00268"/>
    </source>
</evidence>
<proteinExistence type="inferred from homology"/>
<accession>A9R0V9</accession>
<feature type="chain" id="PRO_1000114387" description="Protein RecA">
    <location>
        <begin position="1"/>
        <end position="356"/>
    </location>
</feature>
<feature type="binding site" evidence="1">
    <location>
        <begin position="67"/>
        <end position="74"/>
    </location>
    <ligand>
        <name>ATP</name>
        <dbReference type="ChEBI" id="CHEBI:30616"/>
    </ligand>
</feature>
<organism>
    <name type="scientific">Yersinia pestis bv. Antiqua (strain Angola)</name>
    <dbReference type="NCBI Taxonomy" id="349746"/>
    <lineage>
        <taxon>Bacteria</taxon>
        <taxon>Pseudomonadati</taxon>
        <taxon>Pseudomonadota</taxon>
        <taxon>Gammaproteobacteria</taxon>
        <taxon>Enterobacterales</taxon>
        <taxon>Yersiniaceae</taxon>
        <taxon>Yersinia</taxon>
    </lineage>
</organism>
<dbReference type="EMBL" id="CP000901">
    <property type="protein sequence ID" value="ABX85812.1"/>
    <property type="molecule type" value="Genomic_DNA"/>
</dbReference>
<dbReference type="RefSeq" id="WP_002209446.1">
    <property type="nucleotide sequence ID" value="NZ_CP009935.1"/>
</dbReference>
<dbReference type="SMR" id="A9R0V9"/>
<dbReference type="GeneID" id="57975402"/>
<dbReference type="KEGG" id="ypg:YpAngola_A0901"/>
<dbReference type="PATRIC" id="fig|349746.12.peg.1852"/>
<dbReference type="GO" id="GO:0005829">
    <property type="term" value="C:cytosol"/>
    <property type="evidence" value="ECO:0007669"/>
    <property type="project" value="TreeGrafter"/>
</dbReference>
<dbReference type="GO" id="GO:0005524">
    <property type="term" value="F:ATP binding"/>
    <property type="evidence" value="ECO:0007669"/>
    <property type="project" value="UniProtKB-UniRule"/>
</dbReference>
<dbReference type="GO" id="GO:0016887">
    <property type="term" value="F:ATP hydrolysis activity"/>
    <property type="evidence" value="ECO:0007669"/>
    <property type="project" value="InterPro"/>
</dbReference>
<dbReference type="GO" id="GO:0140664">
    <property type="term" value="F:ATP-dependent DNA damage sensor activity"/>
    <property type="evidence" value="ECO:0007669"/>
    <property type="project" value="InterPro"/>
</dbReference>
<dbReference type="GO" id="GO:0003684">
    <property type="term" value="F:damaged DNA binding"/>
    <property type="evidence" value="ECO:0007669"/>
    <property type="project" value="UniProtKB-UniRule"/>
</dbReference>
<dbReference type="GO" id="GO:0003697">
    <property type="term" value="F:single-stranded DNA binding"/>
    <property type="evidence" value="ECO:0007669"/>
    <property type="project" value="UniProtKB-UniRule"/>
</dbReference>
<dbReference type="GO" id="GO:0006310">
    <property type="term" value="P:DNA recombination"/>
    <property type="evidence" value="ECO:0007669"/>
    <property type="project" value="UniProtKB-UniRule"/>
</dbReference>
<dbReference type="GO" id="GO:0006281">
    <property type="term" value="P:DNA repair"/>
    <property type="evidence" value="ECO:0007669"/>
    <property type="project" value="UniProtKB-UniRule"/>
</dbReference>
<dbReference type="GO" id="GO:0009432">
    <property type="term" value="P:SOS response"/>
    <property type="evidence" value="ECO:0007669"/>
    <property type="project" value="UniProtKB-UniRule"/>
</dbReference>
<dbReference type="CDD" id="cd00983">
    <property type="entry name" value="RecA"/>
    <property type="match status" value="1"/>
</dbReference>
<dbReference type="FunFam" id="3.40.50.300:FF:000087">
    <property type="entry name" value="Recombinase RecA"/>
    <property type="match status" value="1"/>
</dbReference>
<dbReference type="Gene3D" id="3.40.50.300">
    <property type="entry name" value="P-loop containing nucleotide triphosphate hydrolases"/>
    <property type="match status" value="1"/>
</dbReference>
<dbReference type="HAMAP" id="MF_00268">
    <property type="entry name" value="RecA"/>
    <property type="match status" value="1"/>
</dbReference>
<dbReference type="InterPro" id="IPR003593">
    <property type="entry name" value="AAA+_ATPase"/>
</dbReference>
<dbReference type="InterPro" id="IPR013765">
    <property type="entry name" value="DNA_recomb/repair_RecA"/>
</dbReference>
<dbReference type="InterPro" id="IPR020584">
    <property type="entry name" value="DNA_recomb/repair_RecA_CS"/>
</dbReference>
<dbReference type="InterPro" id="IPR027417">
    <property type="entry name" value="P-loop_NTPase"/>
</dbReference>
<dbReference type="InterPro" id="IPR049261">
    <property type="entry name" value="RecA-like_C"/>
</dbReference>
<dbReference type="InterPro" id="IPR049428">
    <property type="entry name" value="RecA-like_N"/>
</dbReference>
<dbReference type="InterPro" id="IPR020588">
    <property type="entry name" value="RecA_ATP-bd"/>
</dbReference>
<dbReference type="InterPro" id="IPR023400">
    <property type="entry name" value="RecA_C_sf"/>
</dbReference>
<dbReference type="InterPro" id="IPR020587">
    <property type="entry name" value="RecA_monomer-monomer_interface"/>
</dbReference>
<dbReference type="NCBIfam" id="TIGR02012">
    <property type="entry name" value="tigrfam_recA"/>
    <property type="match status" value="1"/>
</dbReference>
<dbReference type="PANTHER" id="PTHR45900:SF1">
    <property type="entry name" value="MITOCHONDRIAL DNA REPAIR PROTEIN RECA HOMOLOG-RELATED"/>
    <property type="match status" value="1"/>
</dbReference>
<dbReference type="PANTHER" id="PTHR45900">
    <property type="entry name" value="RECA"/>
    <property type="match status" value="1"/>
</dbReference>
<dbReference type="Pfam" id="PF00154">
    <property type="entry name" value="RecA"/>
    <property type="match status" value="1"/>
</dbReference>
<dbReference type="Pfam" id="PF21096">
    <property type="entry name" value="RecA_C"/>
    <property type="match status" value="1"/>
</dbReference>
<dbReference type="PRINTS" id="PR00142">
    <property type="entry name" value="RECA"/>
</dbReference>
<dbReference type="SMART" id="SM00382">
    <property type="entry name" value="AAA"/>
    <property type="match status" value="1"/>
</dbReference>
<dbReference type="SUPFAM" id="SSF52540">
    <property type="entry name" value="P-loop containing nucleoside triphosphate hydrolases"/>
    <property type="match status" value="1"/>
</dbReference>
<dbReference type="SUPFAM" id="SSF54752">
    <property type="entry name" value="RecA protein, C-terminal domain"/>
    <property type="match status" value="1"/>
</dbReference>
<dbReference type="PROSITE" id="PS00321">
    <property type="entry name" value="RECA_1"/>
    <property type="match status" value="1"/>
</dbReference>
<dbReference type="PROSITE" id="PS50162">
    <property type="entry name" value="RECA_2"/>
    <property type="match status" value="1"/>
</dbReference>
<dbReference type="PROSITE" id="PS50163">
    <property type="entry name" value="RECA_3"/>
    <property type="match status" value="1"/>
</dbReference>
<name>RECA_YERPG</name>
<gene>
    <name evidence="1" type="primary">recA</name>
    <name type="ordered locus">YpAngola_A0901</name>
</gene>
<reference key="1">
    <citation type="journal article" date="2010" name="J. Bacteriol.">
        <title>Genome sequence of the deep-rooted Yersinia pestis strain Angola reveals new insights into the evolution and pangenome of the plague bacterium.</title>
        <authorList>
            <person name="Eppinger M."/>
            <person name="Worsham P.L."/>
            <person name="Nikolich M.P."/>
            <person name="Riley D.R."/>
            <person name="Sebastian Y."/>
            <person name="Mou S."/>
            <person name="Achtman M."/>
            <person name="Lindler L.E."/>
            <person name="Ravel J."/>
        </authorList>
    </citation>
    <scope>NUCLEOTIDE SEQUENCE [LARGE SCALE GENOMIC DNA]</scope>
    <source>
        <strain>Angola</strain>
    </source>
</reference>
<comment type="function">
    <text evidence="1">Can catalyze the hydrolysis of ATP in the presence of single-stranded DNA, the ATP-dependent uptake of single-stranded DNA by duplex DNA, and the ATP-dependent hybridization of homologous single-stranded DNAs. It interacts with LexA causing its activation and leading to its autocatalytic cleavage.</text>
</comment>
<comment type="subcellular location">
    <subcellularLocation>
        <location evidence="1">Cytoplasm</location>
    </subcellularLocation>
</comment>
<comment type="similarity">
    <text evidence="1">Belongs to the RecA family.</text>
</comment>
<protein>
    <recommendedName>
        <fullName evidence="1">Protein RecA</fullName>
    </recommendedName>
    <alternativeName>
        <fullName evidence="1">Recombinase A</fullName>
    </alternativeName>
</protein>
<sequence length="356" mass="37886">MAIDENKQKALAAALGQIEKQFGKGSIMRLGEDRSMDVETISTGSLSLDIALGAGGLPMGRIVEIYGPESSGKTTLTLQVIAAAQREGKTCAFIDAEHALDPIYAKKLGVDIDNLLCSQPDTGEQALEICDALTRSGAVDVIIVDSVAALTPKAEIEGEIGDSHMGLAARMMSQAMRKLAGNLKNANTLLIFINQIRMKIGVMFGNPETTTGGNALKFYASVRLDIRRIGAVKDGDVVVGSETRVKVVKNKIAAPFKQAEFQILYGEGININGELVDLGVKHKLIEKAGAWYSYNGDKIGQGKANASNYLKENPAIAAELDKKLREMLLNGGNGEQPVAAATAEFADGADETNEEF</sequence>